<reference key="1">
    <citation type="journal article" date="1997" name="J. Bacteriol.">
        <title>Complete genome sequence of Methanobacterium thermoautotrophicum deltaH: functional analysis and comparative genomics.</title>
        <authorList>
            <person name="Smith D.R."/>
            <person name="Doucette-Stamm L.A."/>
            <person name="Deloughery C."/>
            <person name="Lee H.-M."/>
            <person name="Dubois J."/>
            <person name="Aldredge T."/>
            <person name="Bashirzadeh R."/>
            <person name="Blakely D."/>
            <person name="Cook R."/>
            <person name="Gilbert K."/>
            <person name="Harrison D."/>
            <person name="Hoang L."/>
            <person name="Keagle P."/>
            <person name="Lumm W."/>
            <person name="Pothier B."/>
            <person name="Qiu D."/>
            <person name="Spadafora R."/>
            <person name="Vicare R."/>
            <person name="Wang Y."/>
            <person name="Wierzbowski J."/>
            <person name="Gibson R."/>
            <person name="Jiwani N."/>
            <person name="Caruso A."/>
            <person name="Bush D."/>
            <person name="Safer H."/>
            <person name="Patwell D."/>
            <person name="Prabhakar S."/>
            <person name="McDougall S."/>
            <person name="Shimer G."/>
            <person name="Goyal A."/>
            <person name="Pietrovski S."/>
            <person name="Church G.M."/>
            <person name="Daniels C.J."/>
            <person name="Mao J.-I."/>
            <person name="Rice P."/>
            <person name="Noelling J."/>
            <person name="Reeve J.N."/>
        </authorList>
    </citation>
    <scope>NUCLEOTIDE SEQUENCE [LARGE SCALE GENOMIC DNA]</scope>
    <source>
        <strain>ATCC 29096 / DSM 1053 / JCM 10044 / NBRC 100330 / Delta H</strain>
    </source>
</reference>
<name>Y273_METTH</name>
<keyword id="KW-1185">Reference proteome</keyword>
<evidence type="ECO:0000305" key="1"/>
<comment type="similarity">
    <text evidence="1">Belongs to the UPF0098 family.</text>
</comment>
<organism>
    <name type="scientific">Methanothermobacter thermautotrophicus (strain ATCC 29096 / DSM 1053 / JCM 10044 / NBRC 100330 / Delta H)</name>
    <name type="common">Methanobacterium thermoautotrophicum</name>
    <dbReference type="NCBI Taxonomy" id="187420"/>
    <lineage>
        <taxon>Archaea</taxon>
        <taxon>Methanobacteriati</taxon>
        <taxon>Methanobacteriota</taxon>
        <taxon>Methanomada group</taxon>
        <taxon>Methanobacteria</taxon>
        <taxon>Methanobacteriales</taxon>
        <taxon>Methanobacteriaceae</taxon>
        <taxon>Methanothermobacter</taxon>
    </lineage>
</organism>
<gene>
    <name type="ordered locus">MTH_273</name>
</gene>
<accession>O26373</accession>
<dbReference type="EMBL" id="AE000666">
    <property type="protein sequence ID" value="AAB84779.1"/>
    <property type="molecule type" value="Genomic_DNA"/>
</dbReference>
<dbReference type="PIR" id="E69134">
    <property type="entry name" value="E69134"/>
</dbReference>
<dbReference type="RefSeq" id="WP_010875912.1">
    <property type="nucleotide sequence ID" value="NC_000916.1"/>
</dbReference>
<dbReference type="SMR" id="O26373"/>
<dbReference type="STRING" id="187420.MTH_273"/>
<dbReference type="PaxDb" id="187420-MTH_273"/>
<dbReference type="EnsemblBacteria" id="AAB84779">
    <property type="protein sequence ID" value="AAB84779"/>
    <property type="gene ID" value="MTH_273"/>
</dbReference>
<dbReference type="KEGG" id="mth:MTH_273"/>
<dbReference type="PATRIC" id="fig|187420.15.peg.242"/>
<dbReference type="HOGENOM" id="CLU_083918_3_2_2"/>
<dbReference type="InParanoid" id="O26373"/>
<dbReference type="Proteomes" id="UP000005223">
    <property type="component" value="Chromosome"/>
</dbReference>
<dbReference type="CDD" id="cd00865">
    <property type="entry name" value="PEBP_bact_arch"/>
    <property type="match status" value="1"/>
</dbReference>
<dbReference type="Gene3D" id="3.90.280.10">
    <property type="entry name" value="PEBP-like"/>
    <property type="match status" value="1"/>
</dbReference>
<dbReference type="InterPro" id="IPR008914">
    <property type="entry name" value="PEBP"/>
</dbReference>
<dbReference type="InterPro" id="IPR036610">
    <property type="entry name" value="PEBP-like_sf"/>
</dbReference>
<dbReference type="InterPro" id="IPR005247">
    <property type="entry name" value="YbhB_YbcL/LppC-like"/>
</dbReference>
<dbReference type="NCBIfam" id="TIGR00481">
    <property type="entry name" value="YbhB/YbcL family Raf kinase inhibitor-like protein"/>
    <property type="match status" value="1"/>
</dbReference>
<dbReference type="PANTHER" id="PTHR30289:SF1">
    <property type="entry name" value="PEBP (PHOSPHATIDYLETHANOLAMINE-BINDING PROTEIN) FAMILY PROTEIN"/>
    <property type="match status" value="1"/>
</dbReference>
<dbReference type="PANTHER" id="PTHR30289">
    <property type="entry name" value="UNCHARACTERIZED PROTEIN YBCL-RELATED"/>
    <property type="match status" value="1"/>
</dbReference>
<dbReference type="Pfam" id="PF01161">
    <property type="entry name" value="PBP"/>
    <property type="match status" value="1"/>
</dbReference>
<dbReference type="SUPFAM" id="SSF49777">
    <property type="entry name" value="PEBP-like"/>
    <property type="match status" value="1"/>
</dbReference>
<feature type="chain" id="PRO_0000137913" description="UPF0098 protein MTH_273">
    <location>
        <begin position="1"/>
        <end position="151"/>
    </location>
</feature>
<protein>
    <recommendedName>
        <fullName>UPF0098 protein MTH_273</fullName>
    </recommendedName>
</protein>
<proteinExistence type="inferred from homology"/>
<sequence length="151" mass="16497">MNLKTHAFNDRGRIPSRYTCDGENISPPLSWDGVPGEAKSLALICDDPDAPSKVWTHWVIFNIPPDSTGLEENVPDAGRLPDGSVQGYNDSGTLGYRGPCPPSGVHRYFFRLYALDTVLDLEPGASKEDVLEAMEGHVLGEAKLIGLYRRG</sequence>